<name>LYSX_RHOJR</name>
<proteinExistence type="inferred from homology"/>
<keyword id="KW-0030">Aminoacyl-tRNA synthetase</keyword>
<keyword id="KW-0046">Antibiotic resistance</keyword>
<keyword id="KW-0067">ATP-binding</keyword>
<keyword id="KW-1003">Cell membrane</keyword>
<keyword id="KW-0238">DNA-binding</keyword>
<keyword id="KW-0436">Ligase</keyword>
<keyword id="KW-0443">Lipid metabolism</keyword>
<keyword id="KW-0460">Magnesium</keyword>
<keyword id="KW-0472">Membrane</keyword>
<keyword id="KW-0479">Metal-binding</keyword>
<keyword id="KW-0511">Multifunctional enzyme</keyword>
<keyword id="KW-0547">Nucleotide-binding</keyword>
<keyword id="KW-0808">Transferase</keyword>
<keyword id="KW-0812">Transmembrane</keyword>
<keyword id="KW-1133">Transmembrane helix</keyword>
<protein>
    <recommendedName>
        <fullName>Lysylphosphatidylglycerol biosynthesis bifunctional protein LysX</fullName>
    </recommendedName>
    <domain>
        <recommendedName>
            <fullName>Lysine--tRNA ligase</fullName>
            <ecNumber>6.1.1.6</ecNumber>
        </recommendedName>
        <alternativeName>
            <fullName>Lysyl-tRNA synthetase</fullName>
            <shortName>LysRS</shortName>
        </alternativeName>
    </domain>
    <domain>
        <recommendedName>
            <fullName>Phosphatidylglycerol lysyltransferase</fullName>
            <ecNumber>2.3.2.3</ecNumber>
        </recommendedName>
        <alternativeName>
            <fullName>Lysylphosphatidylglycerol synthetase</fullName>
            <shortName>LPG synthetase</shortName>
        </alternativeName>
    </domain>
</protein>
<dbReference type="EC" id="6.1.1.6"/>
<dbReference type="EC" id="2.3.2.3"/>
<dbReference type="EMBL" id="CP000431">
    <property type="protein sequence ID" value="ABG95533.1"/>
    <property type="molecule type" value="Genomic_DNA"/>
</dbReference>
<dbReference type="RefSeq" id="WP_011596305.1">
    <property type="nucleotide sequence ID" value="NC_008268.1"/>
</dbReference>
<dbReference type="SMR" id="Q0SAA3"/>
<dbReference type="KEGG" id="rha:RHA1_ro03733"/>
<dbReference type="PATRIC" id="fig|101510.16.peg.3756"/>
<dbReference type="eggNOG" id="COG1190">
    <property type="taxonomic scope" value="Bacteria"/>
</dbReference>
<dbReference type="eggNOG" id="COG2898">
    <property type="taxonomic scope" value="Bacteria"/>
</dbReference>
<dbReference type="HOGENOM" id="CLU_008255_2_0_11"/>
<dbReference type="OrthoDB" id="9801152at2"/>
<dbReference type="Proteomes" id="UP000008710">
    <property type="component" value="Chromosome"/>
</dbReference>
<dbReference type="GO" id="GO:0005829">
    <property type="term" value="C:cytosol"/>
    <property type="evidence" value="ECO:0007669"/>
    <property type="project" value="TreeGrafter"/>
</dbReference>
<dbReference type="GO" id="GO:0005886">
    <property type="term" value="C:plasma membrane"/>
    <property type="evidence" value="ECO:0007669"/>
    <property type="project" value="UniProtKB-SubCell"/>
</dbReference>
<dbReference type="GO" id="GO:0005524">
    <property type="term" value="F:ATP binding"/>
    <property type="evidence" value="ECO:0007669"/>
    <property type="project" value="UniProtKB-UniRule"/>
</dbReference>
<dbReference type="GO" id="GO:0003677">
    <property type="term" value="F:DNA binding"/>
    <property type="evidence" value="ECO:0007669"/>
    <property type="project" value="UniProtKB-KW"/>
</dbReference>
<dbReference type="GO" id="GO:0004824">
    <property type="term" value="F:lysine-tRNA ligase activity"/>
    <property type="evidence" value="ECO:0007669"/>
    <property type="project" value="UniProtKB-UniRule"/>
</dbReference>
<dbReference type="GO" id="GO:0000287">
    <property type="term" value="F:magnesium ion binding"/>
    <property type="evidence" value="ECO:0007669"/>
    <property type="project" value="UniProtKB-UniRule"/>
</dbReference>
<dbReference type="GO" id="GO:0050071">
    <property type="term" value="F:phosphatidylglycerol lysyltransferase activity"/>
    <property type="evidence" value="ECO:0007669"/>
    <property type="project" value="UniProtKB-EC"/>
</dbReference>
<dbReference type="GO" id="GO:0000049">
    <property type="term" value="F:tRNA binding"/>
    <property type="evidence" value="ECO:0007669"/>
    <property type="project" value="TreeGrafter"/>
</dbReference>
<dbReference type="GO" id="GO:0006629">
    <property type="term" value="P:lipid metabolic process"/>
    <property type="evidence" value="ECO:0007669"/>
    <property type="project" value="UniProtKB-KW"/>
</dbReference>
<dbReference type="GO" id="GO:0006430">
    <property type="term" value="P:lysyl-tRNA aminoacylation"/>
    <property type="evidence" value="ECO:0007669"/>
    <property type="project" value="UniProtKB-UniRule"/>
</dbReference>
<dbReference type="GO" id="GO:0046677">
    <property type="term" value="P:response to antibiotic"/>
    <property type="evidence" value="ECO:0007669"/>
    <property type="project" value="UniProtKB-KW"/>
</dbReference>
<dbReference type="CDD" id="cd04322">
    <property type="entry name" value="LysRS_N"/>
    <property type="match status" value="1"/>
</dbReference>
<dbReference type="Gene3D" id="3.30.930.10">
    <property type="entry name" value="Bira Bifunctional Protein, Domain 2"/>
    <property type="match status" value="1"/>
</dbReference>
<dbReference type="Gene3D" id="2.40.50.140">
    <property type="entry name" value="Nucleic acid-binding proteins"/>
    <property type="match status" value="1"/>
</dbReference>
<dbReference type="HAMAP" id="MF_00252">
    <property type="entry name" value="Lys_tRNA_synth_class2"/>
    <property type="match status" value="1"/>
</dbReference>
<dbReference type="InterPro" id="IPR004364">
    <property type="entry name" value="Aa-tRNA-synt_II"/>
</dbReference>
<dbReference type="InterPro" id="IPR006195">
    <property type="entry name" value="aa-tRNA-synth_II"/>
</dbReference>
<dbReference type="InterPro" id="IPR045864">
    <property type="entry name" value="aa-tRNA-synth_II/BPL/LPL"/>
</dbReference>
<dbReference type="InterPro" id="IPR024320">
    <property type="entry name" value="LPG_synthase_C"/>
</dbReference>
<dbReference type="InterPro" id="IPR002313">
    <property type="entry name" value="Lys-tRNA-ligase_II"/>
</dbReference>
<dbReference type="InterPro" id="IPR044136">
    <property type="entry name" value="Lys-tRNA-ligase_II_N"/>
</dbReference>
<dbReference type="InterPro" id="IPR018149">
    <property type="entry name" value="Lys-tRNA-synth_II_C"/>
</dbReference>
<dbReference type="InterPro" id="IPR012340">
    <property type="entry name" value="NA-bd_OB-fold"/>
</dbReference>
<dbReference type="InterPro" id="IPR004365">
    <property type="entry name" value="NA-bd_OB_tRNA"/>
</dbReference>
<dbReference type="InterPro" id="IPR031553">
    <property type="entry name" value="tRNA-synt_2_TM"/>
</dbReference>
<dbReference type="NCBIfam" id="TIGR00499">
    <property type="entry name" value="lysS_bact"/>
    <property type="match status" value="1"/>
</dbReference>
<dbReference type="NCBIfam" id="NF001756">
    <property type="entry name" value="PRK00484.1"/>
    <property type="match status" value="1"/>
</dbReference>
<dbReference type="NCBIfam" id="NF002821">
    <property type="entry name" value="PRK02983.1"/>
    <property type="match status" value="1"/>
</dbReference>
<dbReference type="PANTHER" id="PTHR42918:SF15">
    <property type="entry name" value="LYSINE--TRNA LIGASE, CHLOROPLASTIC_MITOCHONDRIAL"/>
    <property type="match status" value="1"/>
</dbReference>
<dbReference type="PANTHER" id="PTHR42918">
    <property type="entry name" value="LYSYL-TRNA SYNTHETASE"/>
    <property type="match status" value="1"/>
</dbReference>
<dbReference type="Pfam" id="PF09924">
    <property type="entry name" value="LPG_synthase_C"/>
    <property type="match status" value="1"/>
</dbReference>
<dbReference type="Pfam" id="PF00152">
    <property type="entry name" value="tRNA-synt_2"/>
    <property type="match status" value="1"/>
</dbReference>
<dbReference type="Pfam" id="PF16995">
    <property type="entry name" value="tRNA-synt_2_TM"/>
    <property type="match status" value="1"/>
</dbReference>
<dbReference type="Pfam" id="PF01336">
    <property type="entry name" value="tRNA_anti-codon"/>
    <property type="match status" value="1"/>
</dbReference>
<dbReference type="PRINTS" id="PR00982">
    <property type="entry name" value="TRNASYNTHLYS"/>
</dbReference>
<dbReference type="SUPFAM" id="SSF55681">
    <property type="entry name" value="Class II aaRS and biotin synthetases"/>
    <property type="match status" value="1"/>
</dbReference>
<dbReference type="SUPFAM" id="SSF50249">
    <property type="entry name" value="Nucleic acid-binding proteins"/>
    <property type="match status" value="1"/>
</dbReference>
<dbReference type="PROSITE" id="PS50862">
    <property type="entry name" value="AA_TRNA_LIGASE_II"/>
    <property type="match status" value="1"/>
</dbReference>
<comment type="function">
    <text evidence="1">Catalyzes the production of L-lysyl-tRNA(Lys)transfer and the transfer of a lysyl group from L-lysyl-tRNA(Lys) to membrane-bound phosphatidylglycerol (PG), which produces lysylphosphatidylglycerol (LPG), one of the components of the bacterial membrane with a positive net charge. LPG synthesis contributes to the resistance to cationic antimicrobial peptides (CAMPs) and likely protects M.tuberculosis against the CAMPs produced by competiting microorganisms (bacteriocins). In fact, the modification of anionic phosphatidylglycerol with positively charged L-lysine results in repulsion of the peptides (By similarity).</text>
</comment>
<comment type="catalytic activity">
    <reaction>
        <text>tRNA(Lys) + L-lysine + ATP = L-lysyl-tRNA(Lys) + AMP + diphosphate</text>
        <dbReference type="Rhea" id="RHEA:20792"/>
        <dbReference type="Rhea" id="RHEA-COMP:9696"/>
        <dbReference type="Rhea" id="RHEA-COMP:9697"/>
        <dbReference type="ChEBI" id="CHEBI:30616"/>
        <dbReference type="ChEBI" id="CHEBI:32551"/>
        <dbReference type="ChEBI" id="CHEBI:33019"/>
        <dbReference type="ChEBI" id="CHEBI:78442"/>
        <dbReference type="ChEBI" id="CHEBI:78529"/>
        <dbReference type="ChEBI" id="CHEBI:456215"/>
        <dbReference type="EC" id="6.1.1.6"/>
    </reaction>
</comment>
<comment type="catalytic activity">
    <reaction>
        <text>L-lysyl-tRNA(Lys) + a 1,2-diacyl-sn-glycero-3-phospho-(1'-sn-glycerol) = a 1,2-diacyl-sn-glycero-3-phospho-1'-(3'-O-L-lysyl)-sn-glycerol + tRNA(Lys)</text>
        <dbReference type="Rhea" id="RHEA:10668"/>
        <dbReference type="Rhea" id="RHEA-COMP:9696"/>
        <dbReference type="Rhea" id="RHEA-COMP:9697"/>
        <dbReference type="ChEBI" id="CHEBI:64716"/>
        <dbReference type="ChEBI" id="CHEBI:75792"/>
        <dbReference type="ChEBI" id="CHEBI:78442"/>
        <dbReference type="ChEBI" id="CHEBI:78529"/>
        <dbReference type="EC" id="2.3.2.3"/>
    </reaction>
</comment>
<comment type="cofactor">
    <cofactor evidence="1">
        <name>Mg(2+)</name>
        <dbReference type="ChEBI" id="CHEBI:18420"/>
    </cofactor>
    <text evidence="1">Binds 3 Mg(2+) ions per subunit.</text>
</comment>
<comment type="subcellular location">
    <subcellularLocation>
        <location evidence="4">Cell membrane</location>
        <topology evidence="4">Multi-pass membrane protein</topology>
    </subcellularLocation>
</comment>
<comment type="similarity">
    <text evidence="4">In the N-terminal section; belongs to the LPG synthetase family.</text>
</comment>
<comment type="similarity">
    <text evidence="4">In the C-terminal section; belongs to the class-II aminoacyl-tRNA synthetase family.</text>
</comment>
<organism>
    <name type="scientific">Rhodococcus jostii (strain RHA1)</name>
    <dbReference type="NCBI Taxonomy" id="101510"/>
    <lineage>
        <taxon>Bacteria</taxon>
        <taxon>Bacillati</taxon>
        <taxon>Actinomycetota</taxon>
        <taxon>Actinomycetes</taxon>
        <taxon>Mycobacteriales</taxon>
        <taxon>Nocardiaceae</taxon>
        <taxon>Rhodococcus</taxon>
    </lineage>
</organism>
<gene>
    <name type="primary">lysX</name>
    <name type="ordered locus">RHA1_ro03733</name>
</gene>
<accession>Q0SAA3</accession>
<reference key="1">
    <citation type="journal article" date="2006" name="Proc. Natl. Acad. Sci. U.S.A.">
        <title>The complete genome of Rhodococcus sp. RHA1 provides insights into a catabolic powerhouse.</title>
        <authorList>
            <person name="McLeod M.P."/>
            <person name="Warren R.L."/>
            <person name="Hsiao W.W.L."/>
            <person name="Araki N."/>
            <person name="Myhre M."/>
            <person name="Fernandes C."/>
            <person name="Miyazawa D."/>
            <person name="Wong W."/>
            <person name="Lillquist A.L."/>
            <person name="Wang D."/>
            <person name="Dosanjh M."/>
            <person name="Hara H."/>
            <person name="Petrescu A."/>
            <person name="Morin R.D."/>
            <person name="Yang G."/>
            <person name="Stott J.M."/>
            <person name="Schein J.E."/>
            <person name="Shin H."/>
            <person name="Smailus D."/>
            <person name="Siddiqui A.S."/>
            <person name="Marra M.A."/>
            <person name="Jones S.J.M."/>
            <person name="Holt R."/>
            <person name="Brinkman F.S.L."/>
            <person name="Miyauchi K."/>
            <person name="Fukuda M."/>
            <person name="Davies J.E."/>
            <person name="Mohn W.W."/>
            <person name="Eltis L.D."/>
        </authorList>
    </citation>
    <scope>NUCLEOTIDE SEQUENCE [LARGE SCALE GENOMIC DNA]</scope>
    <source>
        <strain>RHA1</strain>
    </source>
</reference>
<feature type="chain" id="PRO_0000394336" description="Lysylphosphatidylglycerol biosynthesis bifunctional protein LysX">
    <location>
        <begin position="1"/>
        <end position="1114"/>
    </location>
</feature>
<feature type="transmembrane region" description="Helical" evidence="2">
    <location>
        <begin position="38"/>
        <end position="58"/>
    </location>
</feature>
<feature type="transmembrane region" description="Helical" evidence="2">
    <location>
        <begin position="77"/>
        <end position="97"/>
    </location>
</feature>
<feature type="transmembrane region" description="Helical" evidence="2">
    <location>
        <begin position="101"/>
        <end position="121"/>
    </location>
</feature>
<feature type="transmembrane region" description="Helical" evidence="2">
    <location>
        <begin position="126"/>
        <end position="146"/>
    </location>
</feature>
<feature type="transmembrane region" description="Helical" evidence="2">
    <location>
        <begin position="164"/>
        <end position="184"/>
    </location>
</feature>
<feature type="transmembrane region" description="Helical" evidence="2">
    <location>
        <begin position="219"/>
        <end position="239"/>
    </location>
</feature>
<feature type="DNA-binding region" description="OB">
    <location>
        <begin position="674"/>
        <end position="751"/>
    </location>
</feature>
<feature type="region of interest" description="Phosphatidylglycerol lysyltransferase">
    <location>
        <begin position="1"/>
        <end position="618"/>
    </location>
</feature>
<feature type="region of interest" description="Disordered" evidence="3">
    <location>
        <begin position="1"/>
        <end position="26"/>
    </location>
</feature>
<feature type="region of interest" description="Lysine--tRNA ligase">
    <location>
        <begin position="619"/>
        <end position="1114"/>
    </location>
</feature>
<feature type="compositionally biased region" description="Basic and acidic residues" evidence="3">
    <location>
        <begin position="1"/>
        <end position="11"/>
    </location>
</feature>
<feature type="binding site" evidence="1">
    <location>
        <position position="1025"/>
    </location>
    <ligand>
        <name>Mg(2+)</name>
        <dbReference type="ChEBI" id="CHEBI:18420"/>
        <label>1</label>
    </ligand>
</feature>
<feature type="binding site" evidence="1">
    <location>
        <position position="1032"/>
    </location>
    <ligand>
        <name>Mg(2+)</name>
        <dbReference type="ChEBI" id="CHEBI:18420"/>
        <label>1</label>
    </ligand>
</feature>
<feature type="binding site" evidence="1">
    <location>
        <position position="1032"/>
    </location>
    <ligand>
        <name>Mg(2+)</name>
        <dbReference type="ChEBI" id="CHEBI:18420"/>
        <label>2</label>
    </ligand>
</feature>
<evidence type="ECO:0000250" key="1"/>
<evidence type="ECO:0000255" key="2"/>
<evidence type="ECO:0000256" key="3">
    <source>
        <dbReference type="SAM" id="MobiDB-lite"/>
    </source>
</evidence>
<evidence type="ECO:0000305" key="4"/>
<sequence length="1114" mass="122363">MSASTETHHASEAAVPTAPRPRPGLGTKNGRLHQVPHIAGLILGVFSVLVFLWSISPVLRYYVHVPREYVDTYYFDAPDTSLSWALVVALLAAALASRKRIAWWLLTIYLVLFLITNVIVSITDKNVNAMAAAVVQVVLIGILIAARPEFYTRVRRGAGWKALGVLIVGLAIGTLLGWGLVELFPGTLPQNERFLWALNRVTALAAADNEQFTGRPHGFVNTLLGLFGAIALLAAVITLFRAQRSHNALTGNDESALRGLLLQYGADDSLGYFATRRDKAVVFAPSGKAAITYRVELGVCLASGDPIGDPEAWPHAIEEWQALASQYGWATAVMGASETGATAYNKAGLTVLQLGDEAILRTREFNLSGRDMRQVRQAVTRVRRQGVTVRIRRHRDVPAEEMAETIRLADAWRDTETERGFSMALGRLGDRLDGDCLLVEAVAEDGEIDGILSLVPWGPTGVSLDLMRRKPTSPNGVVELMVSELATTSDQFGITKVSLNFAVFRSVFEEGSRIGAGPILRIWRSILVFFSRWWQLEALYRSNVKYQPEWVPRFLCFEDNRELLRVGFASAVAEGFVTLPRFGRSGTRDALEHTGTHAAVPAALVAAEGLHSDGSAPGEGLAPTATGPKRPEQVRVRLDKLAGLAEQGIDPYPVAYPPSHTVTEAVESPEGTTVRIAGRLLRIRDYGGVVFAVVRDWSGDIQILVDEARVGTDRIRAFAAEFDLGDLVEVAGVIGYSRRGALSLLANEWRMTGKCLHPLPDKWKGLSDPETRVRQRYVDLAINSDARRLLEARSAVVKSLRDSLGGRGFLEVETPILQQVHGGANAAPFLTHINAYNLDLYLRIAPELYLKRLCVAGMEKVFEIGRVFRNEGVDFKHNPEFTILEAYEAHSDYEKMMVLCRELIQTAAIAAYGREIIMRPGPDGALVEVDISGEWPVKTMHQAVAEKLGVDVSPETPLTELQRLCDEHEIPYQSTWDAGAVAQEMYEHLVEDYTEFPTFYTNFPTSMSPLTRPHPTIPGVAAKWDLVAWGVELGTAYSELTDPVDQRNRLTEQSMLAAGGDEEAMELDEDFLQALEHAMPPTGGLGMGVDRVVMLITGGSIRETLAFPLAKPRQ</sequence>